<comment type="function">
    <text evidence="1 2">Is a receptor for the SMIM20 derived peptides Phoenixin-14 and Phoenixin-20 (By similarity). It mediates the Phoenixin-14 and Phoenixin-20 augmentation of gonadotropin-releasing hormone (GNRH) signaling in the hypothalamus and pituitary gland (By similarity). In the ovary, it mediates the effects of Phoenixin-14 and Phoenixin-20 induced granulosa cell proliferation during follicular growth (By similarity).</text>
</comment>
<comment type="subcellular location">
    <subcellularLocation>
        <location evidence="5">Cell membrane</location>
        <topology evidence="3">Multi-pass membrane protein</topology>
    </subcellularLocation>
</comment>
<comment type="similarity">
    <text evidence="4">Belongs to the G-protein coupled receptor 1 family.</text>
</comment>
<evidence type="ECO:0000250" key="1">
    <source>
        <dbReference type="UniProtKB" id="Q9JJH2"/>
    </source>
</evidence>
<evidence type="ECO:0000250" key="2">
    <source>
        <dbReference type="UniProtKB" id="Q9NS66"/>
    </source>
</evidence>
<evidence type="ECO:0000255" key="3"/>
<evidence type="ECO:0000255" key="4">
    <source>
        <dbReference type="PROSITE-ProRule" id="PRU00521"/>
    </source>
</evidence>
<evidence type="ECO:0000305" key="5"/>
<accession>Q9I918</accession>
<feature type="chain" id="PRO_0000069653" description="Probable G-protein coupled receptor 173">
    <location>
        <begin position="1"/>
        <end position="387"/>
    </location>
</feature>
<feature type="topological domain" description="Extracellular" evidence="3">
    <location>
        <begin position="1"/>
        <end position="40"/>
    </location>
</feature>
<feature type="transmembrane region" description="Helical; Name=1" evidence="3">
    <location>
        <begin position="41"/>
        <end position="61"/>
    </location>
</feature>
<feature type="topological domain" description="Cytoplasmic" evidence="3">
    <location>
        <begin position="62"/>
        <end position="87"/>
    </location>
</feature>
<feature type="transmembrane region" description="Helical; Name=2" evidence="3">
    <location>
        <begin position="88"/>
        <end position="108"/>
    </location>
</feature>
<feature type="topological domain" description="Extracellular" evidence="3">
    <location>
        <begin position="109"/>
        <end position="111"/>
    </location>
</feature>
<feature type="transmembrane region" description="Helical; Name=3" evidence="3">
    <location>
        <begin position="112"/>
        <end position="132"/>
    </location>
</feature>
<feature type="topological domain" description="Cytoplasmic" evidence="3">
    <location>
        <begin position="133"/>
        <end position="153"/>
    </location>
</feature>
<feature type="transmembrane region" description="Helical; Name=4" evidence="3">
    <location>
        <begin position="154"/>
        <end position="174"/>
    </location>
</feature>
<feature type="topological domain" description="Extracellular" evidence="3">
    <location>
        <begin position="175"/>
        <end position="202"/>
    </location>
</feature>
<feature type="transmembrane region" description="Helical; Name=5" evidence="3">
    <location>
        <begin position="203"/>
        <end position="223"/>
    </location>
</feature>
<feature type="topological domain" description="Cytoplasmic" evidence="3">
    <location>
        <begin position="224"/>
        <end position="301"/>
    </location>
</feature>
<feature type="transmembrane region" description="Helical; Name=6" evidence="3">
    <location>
        <begin position="302"/>
        <end position="322"/>
    </location>
</feature>
<feature type="topological domain" description="Extracellular" evidence="3">
    <location>
        <begin position="323"/>
        <end position="335"/>
    </location>
</feature>
<feature type="transmembrane region" description="Helical; Name=7" evidence="3">
    <location>
        <begin position="336"/>
        <end position="356"/>
    </location>
</feature>
<feature type="topological domain" description="Cytoplasmic" evidence="3">
    <location>
        <begin position="357"/>
        <end position="387"/>
    </location>
</feature>
<feature type="glycosylation site" description="N-linked (GlcNAc...) asparagine" evidence="3">
    <location>
        <position position="5"/>
    </location>
</feature>
<feature type="glycosylation site" description="N-linked (GlcNAc...) asparagine" evidence="3">
    <location>
        <position position="198"/>
    </location>
</feature>
<feature type="disulfide bond" evidence="4">
    <location>
        <begin position="110"/>
        <end position="188"/>
    </location>
</feature>
<protein>
    <recommendedName>
        <fullName>Probable G-protein coupled receptor 173</fullName>
    </recommendedName>
    <alternativeName>
        <fullName>Super conserved receptor expressed in brain 3</fullName>
    </alternativeName>
</protein>
<organism>
    <name type="scientific">Danio rerio</name>
    <name type="common">Zebrafish</name>
    <name type="synonym">Brachydanio rerio</name>
    <dbReference type="NCBI Taxonomy" id="7955"/>
    <lineage>
        <taxon>Eukaryota</taxon>
        <taxon>Metazoa</taxon>
        <taxon>Chordata</taxon>
        <taxon>Craniata</taxon>
        <taxon>Vertebrata</taxon>
        <taxon>Euteleostomi</taxon>
        <taxon>Actinopterygii</taxon>
        <taxon>Neopterygii</taxon>
        <taxon>Teleostei</taxon>
        <taxon>Ostariophysi</taxon>
        <taxon>Cypriniformes</taxon>
        <taxon>Danionidae</taxon>
        <taxon>Danioninae</taxon>
        <taxon>Danio</taxon>
    </lineage>
</organism>
<sequence>MANGNASSDGPGNPLAAVVSTTGGVMGGAPSSAVSTYVKLVLLGLIICISLVGNLVVSLLVLRDRALHKAPYYFLLDLCLADTIRSAVCFPFVLVSIKNGSAWTYSVLSCKVVAFMAVLFCFHAAFMLFCISVTRYMAIAHHRFYSKRMTFWTCVAVVCMVWTLSVAMAFPPVFDVGTYKFIREEDQCIFEHRYFKANDTLGFMLMLAVLILATHVVYMKLLLFEYKHRKMKPVQMVPAISQNWTFHGPGATGQAAANWIAGFGRGPMPPTLLGIRQNLHNQNRRLLGMEEFKAEKQLGRMFYVITLFFLVLWSPYIVACYWRVFVKACTIPHRYLSTTVWMSFAQAGVNPIICFFLNKDLKKGLLAHLPPCCRTPPQLPREPYCVM</sequence>
<dbReference type="EMBL" id="AB040806">
    <property type="protein sequence ID" value="BAA96652.1"/>
    <property type="molecule type" value="Genomic_DNA"/>
</dbReference>
<dbReference type="RefSeq" id="NP_571573.1">
    <property type="nucleotide sequence ID" value="NM_131498.1"/>
</dbReference>
<dbReference type="RefSeq" id="XP_005167115.1">
    <property type="nucleotide sequence ID" value="XM_005167058.5"/>
</dbReference>
<dbReference type="SMR" id="Q9I918"/>
<dbReference type="FunCoup" id="Q9I918">
    <property type="interactions" value="1510"/>
</dbReference>
<dbReference type="STRING" id="7955.ENSDARP00000063004"/>
<dbReference type="GlyCosmos" id="Q9I918">
    <property type="glycosylation" value="2 sites, No reported glycans"/>
</dbReference>
<dbReference type="PaxDb" id="7955-ENSDARP00000063004"/>
<dbReference type="Ensembl" id="ENSDART00000063005">
    <property type="protein sequence ID" value="ENSDARP00000063004"/>
    <property type="gene ID" value="ENSDARG00000042922"/>
</dbReference>
<dbReference type="GeneID" id="57926"/>
<dbReference type="KEGG" id="dre:57926"/>
<dbReference type="AGR" id="ZFIN:ZDB-GENE-000710-1"/>
<dbReference type="CTD" id="54328"/>
<dbReference type="ZFIN" id="ZDB-GENE-000710-1">
    <property type="gene designation" value="gpr173"/>
</dbReference>
<dbReference type="eggNOG" id="KOG3656">
    <property type="taxonomic scope" value="Eukaryota"/>
</dbReference>
<dbReference type="HOGENOM" id="CLU_055518_0_0_1"/>
<dbReference type="InParanoid" id="Q9I918"/>
<dbReference type="OMA" id="KCLRTHT"/>
<dbReference type="OrthoDB" id="6129346at2759"/>
<dbReference type="PhylomeDB" id="Q9I918"/>
<dbReference type="TreeFam" id="TF331163"/>
<dbReference type="PRO" id="PR:Q9I918"/>
<dbReference type="Proteomes" id="UP000000437">
    <property type="component" value="Chromosome 8"/>
</dbReference>
<dbReference type="Bgee" id="ENSDARG00000042922">
    <property type="expression patterns" value="Expressed in brain and 7 other cell types or tissues"/>
</dbReference>
<dbReference type="ExpressionAtlas" id="Q9I918">
    <property type="expression patterns" value="baseline"/>
</dbReference>
<dbReference type="GO" id="GO:0005886">
    <property type="term" value="C:plasma membrane"/>
    <property type="evidence" value="ECO:0000318"/>
    <property type="project" value="GO_Central"/>
</dbReference>
<dbReference type="GO" id="GO:0004930">
    <property type="term" value="F:G protein-coupled receptor activity"/>
    <property type="evidence" value="ECO:0000318"/>
    <property type="project" value="GO_Central"/>
</dbReference>
<dbReference type="CDD" id="cd15217">
    <property type="entry name" value="7tmA_SREB3_GPR173"/>
    <property type="match status" value="1"/>
</dbReference>
<dbReference type="FunFam" id="1.20.1070.10:FF:000074">
    <property type="entry name" value="probable G-protein coupled receptor 173"/>
    <property type="match status" value="1"/>
</dbReference>
<dbReference type="Gene3D" id="1.20.1070.10">
    <property type="entry name" value="Rhodopsin 7-helix transmembrane proteins"/>
    <property type="match status" value="1"/>
</dbReference>
<dbReference type="InterPro" id="IPR051509">
    <property type="entry name" value="GPCR_Orphan/Phoenixin"/>
</dbReference>
<dbReference type="InterPro" id="IPR000276">
    <property type="entry name" value="GPCR_Rhodpsn"/>
</dbReference>
<dbReference type="InterPro" id="IPR017452">
    <property type="entry name" value="GPCR_Rhodpsn_7TM"/>
</dbReference>
<dbReference type="PANTHER" id="PTHR19268">
    <property type="entry name" value="G PROTEIN-COUPLED RECEPTOR"/>
    <property type="match status" value="1"/>
</dbReference>
<dbReference type="PANTHER" id="PTHR19268:SF4">
    <property type="entry name" value="G-PROTEIN COUPLED RECEPTOR 173-RELATED"/>
    <property type="match status" value="1"/>
</dbReference>
<dbReference type="Pfam" id="PF00001">
    <property type="entry name" value="7tm_1"/>
    <property type="match status" value="1"/>
</dbReference>
<dbReference type="PRINTS" id="PR00237">
    <property type="entry name" value="GPCRRHODOPSN"/>
</dbReference>
<dbReference type="SUPFAM" id="SSF81321">
    <property type="entry name" value="Family A G protein-coupled receptor-like"/>
    <property type="match status" value="1"/>
</dbReference>
<dbReference type="PROSITE" id="PS50262">
    <property type="entry name" value="G_PROTEIN_RECEP_F1_2"/>
    <property type="match status" value="1"/>
</dbReference>
<reference key="1">
    <citation type="journal article" date="2000" name="Biochem. Biophys. Res. Commun.">
        <title>An evolutionarily conserved G-protein coupled receptor family, SREB, expressed in the central nervous system.</title>
        <authorList>
            <person name="Matsumoto M."/>
            <person name="Saito T."/>
            <person name="Takasaki J."/>
            <person name="Kamohara M."/>
            <person name="Sugimoto T."/>
            <person name="Kobayashi M."/>
            <person name="Tadokoro M."/>
            <person name="Matsumoto S."/>
            <person name="Ohishi T."/>
            <person name="Furuichi K."/>
        </authorList>
    </citation>
    <scope>NUCLEOTIDE SEQUENCE [GENOMIC DNA]</scope>
</reference>
<name>GP173_DANRE</name>
<proteinExistence type="inferred from homology"/>
<gene>
    <name type="primary">gpr173</name>
    <name type="synonym">sreb3</name>
</gene>
<keyword id="KW-1003">Cell membrane</keyword>
<keyword id="KW-1015">Disulfide bond</keyword>
<keyword id="KW-0297">G-protein coupled receptor</keyword>
<keyword id="KW-0325">Glycoprotein</keyword>
<keyword id="KW-0472">Membrane</keyword>
<keyword id="KW-0675">Receptor</keyword>
<keyword id="KW-1185">Reference proteome</keyword>
<keyword id="KW-0807">Transducer</keyword>
<keyword id="KW-0812">Transmembrane</keyword>
<keyword id="KW-1133">Transmembrane helix</keyword>